<comment type="function">
    <text>Could enhance the fertilizing capacity of bull spermatozoa upon interaction with heparin-like glycosaminoglycans present in the female genital tract. Exhibits both simulatory and inhibitory actions on the release of pituitary gonadotropins.</text>
</comment>
<comment type="subunit">
    <text>Homodimer.</text>
</comment>
<comment type="subcellular location">
    <subcellularLocation>
        <location>Secreted</location>
    </subcellularLocation>
</comment>
<comment type="tissue specificity">
    <text>Major component of seminal plasma.</text>
</comment>
<comment type="PTM">
    <text evidence="3">O-linked glycan consists of Gal-GalNAc disaccharide which is modified with a sialic acid residue (macro- and/or microheterogeneity account for differences between BSP-A1 and BSP-A2).</text>
</comment>
<comment type="similarity">
    <text evidence="5">Belongs to the seminal plasma protein family.</text>
</comment>
<feature type="signal peptide" evidence="2">
    <location>
        <begin position="1"/>
        <end position="25"/>
    </location>
</feature>
<feature type="chain" id="PRO_0000019231" description="Seminal plasma protein PDC-109">
    <location>
        <begin position="26"/>
        <end position="134"/>
    </location>
</feature>
<feature type="domain" description="Fibronectin type-II 1" evidence="1">
    <location>
        <begin position="44"/>
        <end position="88"/>
    </location>
</feature>
<feature type="domain" description="Fibronectin type-II 2" evidence="1">
    <location>
        <begin position="89"/>
        <end position="134"/>
    </location>
</feature>
<feature type="glycosylation site" id="CAR_000071" description="O-linked (GalNAc...) threonine" evidence="3 4">
    <location>
        <position position="36"/>
    </location>
</feature>
<feature type="disulfide bond" evidence="1 2">
    <location>
        <begin position="49"/>
        <end position="73"/>
    </location>
</feature>
<feature type="disulfide bond" evidence="1 2">
    <location>
        <begin position="63"/>
        <end position="86"/>
    </location>
</feature>
<feature type="disulfide bond" evidence="1 2">
    <location>
        <begin position="94"/>
        <end position="119"/>
    </location>
</feature>
<feature type="disulfide bond" evidence="1 2">
    <location>
        <begin position="108"/>
        <end position="134"/>
    </location>
</feature>
<feature type="strand" evidence="6">
    <location>
        <begin position="51"/>
        <end position="55"/>
    </location>
</feature>
<feature type="strand" evidence="6">
    <location>
        <begin position="58"/>
        <end position="62"/>
    </location>
</feature>
<feature type="strand" evidence="6">
    <location>
        <begin position="68"/>
        <end position="70"/>
    </location>
</feature>
<feature type="strand" evidence="6">
    <location>
        <begin position="72"/>
        <end position="78"/>
    </location>
</feature>
<feature type="strand" evidence="6">
    <location>
        <begin position="83"/>
        <end position="85"/>
    </location>
</feature>
<feature type="helix" evidence="6">
    <location>
        <begin position="88"/>
        <end position="90"/>
    </location>
</feature>
<feature type="strand" evidence="6">
    <location>
        <begin position="96"/>
        <end position="100"/>
    </location>
</feature>
<feature type="strand" evidence="6">
    <location>
        <begin position="103"/>
        <end position="107"/>
    </location>
</feature>
<feature type="strand" evidence="6">
    <location>
        <begin position="114"/>
        <end position="116"/>
    </location>
</feature>
<feature type="strand" evidence="6">
    <location>
        <begin position="118"/>
        <end position="124"/>
    </location>
</feature>
<feature type="helix" evidence="6">
    <location>
        <begin position="125"/>
        <end position="128"/>
    </location>
</feature>
<feature type="strand" evidence="6">
    <location>
        <begin position="131"/>
        <end position="133"/>
    </location>
</feature>
<accession>P02784</accession>
<proteinExistence type="evidence at protein level"/>
<sequence length="134" mass="15481">MALQLGLFLIWAGVSVFLQLDPVNGDQDEGVSTEPTQDGPAELPEDEECVFPFVYRNRKHFDCTVHGSLFPWCSLDADYVGRWKYCAQRDYAKCVFPFIYGGKKYETCTKIGSMWMSWCSLSPNYDKDRAWKYC</sequence>
<reference key="1">
    <citation type="journal article" date="1988" name="DNA">
        <title>Cloning and sequence analysis of a cDNA from seminal vesicle tissue encoding the precursor of the major protein of bull semen.</title>
        <authorList>
            <person name="Kemme M."/>
            <person name="Scheit K.H."/>
        </authorList>
    </citation>
    <scope>NUCLEOTIDE SEQUENCE [MRNA]</scope>
</reference>
<reference key="2">
    <citation type="journal article" date="1991" name="Biochim. Biophys. Acta">
        <title>Characterization of the gene for the bovine seminal vesicle secretory protein SVSP109.</title>
        <authorList>
            <person name="Braeuer C."/>
            <person name="Scheit K.H."/>
        </authorList>
    </citation>
    <scope>NUCLEOTIDE SEQUENCE [GENOMIC DNA]</scope>
    <source>
        <tissue>Lung</tissue>
    </source>
</reference>
<reference key="3">
    <citation type="submission" date="1994-05" db="EMBL/GenBank/DDBJ databases">
        <authorList>
            <person name="Braeuer C.C."/>
            <person name="Kleine Kuhlmann J.J."/>
            <person name="Hanes J.J."/>
            <person name="Scheit K.K."/>
        </authorList>
    </citation>
    <scope>NUCLEOTIDE SEQUENCE</scope>
</reference>
<reference key="4">
    <citation type="journal article" date="1983" name="Biochem. Biophys. Res. Commun.">
        <title>Primary structure of PDC-109, a major protein constituent of bovine seminal plasma.</title>
        <authorList>
            <person name="Esch F.S."/>
            <person name="Ling N.C."/>
            <person name="Boehlen P."/>
            <person name="Ying S.Y."/>
            <person name="Guillemin R."/>
        </authorList>
    </citation>
    <scope>PROTEIN SEQUENCE OF 26-134</scope>
    <scope>DISULFIDE BONDS</scope>
</reference>
<reference key="5">
    <citation type="journal article" date="1994" name="FEBS Lett.">
        <title>Localization and structural characterization of an oligosaccharide O-linked to bovine PDC-109. Quantitation of the glycoprotein in seminal plasma and on the surface of ejaculated and capacitated spermatozoa.</title>
        <authorList>
            <person name="Calvete J.J."/>
            <person name="Raida M."/>
            <person name="Sanz L."/>
            <person name="Wempe F."/>
            <person name="Scheit K.H."/>
            <person name="Romero A."/>
            <person name="Toepfer-Petersen E."/>
        </authorList>
    </citation>
    <scope>GLYCOSYLATION AT THR-36</scope>
</reference>
<reference key="6">
    <citation type="journal article" date="1996" name="FEBS Lett.">
        <title>The structure of the O-linked carbohydrate chain of bovine seminal plasma protein PDC-109 revised by H-NMR spectroscopy A correction.</title>
        <authorList>
            <person name="Gerwig G.L."/>
            <person name="Calvete J.J."/>
            <person name="Toepfer-Petersen E."/>
            <person name="Vliegenthart J.F.G."/>
        </authorList>
    </citation>
    <scope>GLYCOSYLATION AT THR-36</scope>
    <scope>STRUCTURE OF CARBOHYDRATE ON THR-36</scope>
</reference>
<reference key="7">
    <citation type="journal article" date="1991" name="Biochemistry">
        <title>Sequence-specific 1H NMR assignments and structural characterization of bovine seminal fluid protein PDC-109 domain b.</title>
        <authorList>
            <person name="Constantine K.L."/>
            <person name="Ramesh V."/>
            <person name="Banyai L."/>
            <person name="Trexler M."/>
            <person name="Patthy L."/>
            <person name="Llinas M."/>
        </authorList>
    </citation>
    <scope>STRUCTURE BY NMR OF 95-134</scope>
</reference>
<reference key="8">
    <citation type="journal article" date="1992" name="J. Mol. Biol.">
        <title>Refined solution structure and ligand-binding properties of PDC-109 domain b. A collagen-binding type II domain.</title>
        <authorList>
            <person name="Constantine K.L."/>
            <person name="Madrid M."/>
            <person name="Banyai L."/>
            <person name="Trexler M."/>
            <person name="Patthy L."/>
            <person name="Llinas M."/>
        </authorList>
    </citation>
    <scope>STRUCTURE BY NMR OF 95-134</scope>
</reference>
<protein>
    <recommendedName>
        <fullName>Seminal plasma protein PDC-109</fullName>
    </recommendedName>
    <alternativeName>
        <fullName>BSP-A1 and BSP-A2</fullName>
    </alternativeName>
    <alternativeName>
        <fullName>Seminal vesicle secretory protein 109</fullName>
        <shortName>SVSP109</shortName>
    </alternativeName>
</protein>
<keyword id="KW-0002">3D-structure</keyword>
<keyword id="KW-0903">Direct protein sequencing</keyword>
<keyword id="KW-1015">Disulfide bond</keyword>
<keyword id="KW-0278">Fertilization</keyword>
<keyword id="KW-0325">Glycoprotein</keyword>
<keyword id="KW-1185">Reference proteome</keyword>
<keyword id="KW-0677">Repeat</keyword>
<keyword id="KW-0964">Secreted</keyword>
<keyword id="KW-0732">Signal</keyword>
<name>SFP1_BOVIN</name>
<dbReference type="EMBL" id="M22244">
    <property type="protein sequence ID" value="AAA30766.1"/>
    <property type="molecule type" value="mRNA"/>
</dbReference>
<dbReference type="EMBL" id="X60495">
    <property type="protein sequence ID" value="CAA43021.1"/>
    <property type="molecule type" value="Genomic_DNA"/>
</dbReference>
<dbReference type="EMBL" id="X60496">
    <property type="protein sequence ID" value="CAA43021.1"/>
    <property type="status" value="JOINED"/>
    <property type="molecule type" value="Genomic_DNA"/>
</dbReference>
<dbReference type="EMBL" id="X60497">
    <property type="protein sequence ID" value="CAA43021.1"/>
    <property type="status" value="JOINED"/>
    <property type="molecule type" value="Genomic_DNA"/>
</dbReference>
<dbReference type="EMBL" id="X60498">
    <property type="protein sequence ID" value="CAA43021.1"/>
    <property type="status" value="JOINED"/>
    <property type="molecule type" value="Genomic_DNA"/>
</dbReference>
<dbReference type="EMBL" id="X60960">
    <property type="status" value="NOT_ANNOTATED_CDS"/>
    <property type="molecule type" value="Genomic_DNA"/>
</dbReference>
<dbReference type="EMBL" id="Z33621">
    <property type="protein sequence ID" value="CAA83915.1"/>
    <property type="molecule type" value="Genomic_DNA"/>
</dbReference>
<dbReference type="PIR" id="S18404">
    <property type="entry name" value="WTBO"/>
</dbReference>
<dbReference type="RefSeq" id="NP_001001145.1">
    <property type="nucleotide sequence ID" value="NM_001001145.1"/>
</dbReference>
<dbReference type="PDB" id="1H8P">
    <property type="method" value="X-ray"/>
    <property type="resolution" value="1.82 A"/>
    <property type="chains" value="A/B=26-134"/>
</dbReference>
<dbReference type="PDB" id="1PDC">
    <property type="method" value="NMR"/>
    <property type="chains" value="A=90-134"/>
</dbReference>
<dbReference type="PDBsum" id="1H8P"/>
<dbReference type="PDBsum" id="1PDC"/>
<dbReference type="BMRB" id="P02784"/>
<dbReference type="SMR" id="P02784"/>
<dbReference type="FunCoup" id="P02784">
    <property type="interactions" value="19"/>
</dbReference>
<dbReference type="STRING" id="9913.ENSBTAP00000051819"/>
<dbReference type="GlyConnect" id="553">
    <property type="glycosylation" value="2 O-Linked glycans (1 site)"/>
</dbReference>
<dbReference type="GlyGen" id="P02784">
    <property type="glycosylation" value="1 site, 3 O-linked glycans (1 site)"/>
</dbReference>
<dbReference type="PaxDb" id="9913-ENSBTAP00000051819"/>
<dbReference type="GeneID" id="407187"/>
<dbReference type="KEGG" id="bta:407187"/>
<dbReference type="CTD" id="407187"/>
<dbReference type="VEuPathDB" id="HostDB:ENSBTAG00000023434"/>
<dbReference type="eggNOG" id="KOG1565">
    <property type="taxonomic scope" value="Eukaryota"/>
</dbReference>
<dbReference type="HOGENOM" id="CLU_126630_0_0_1"/>
<dbReference type="InParanoid" id="P02784"/>
<dbReference type="OMA" id="QPIATDH"/>
<dbReference type="OrthoDB" id="406838at2759"/>
<dbReference type="TreeFam" id="TF343543"/>
<dbReference type="EvolutionaryTrace" id="P02784"/>
<dbReference type="Proteomes" id="UP000009136">
    <property type="component" value="Chromosome 18"/>
</dbReference>
<dbReference type="Bgee" id="ENSBTAG00000023434">
    <property type="expression patterns" value="Expressed in mammary gland fat and 14 other cell types or tissues"/>
</dbReference>
<dbReference type="GO" id="GO:0009986">
    <property type="term" value="C:cell surface"/>
    <property type="evidence" value="ECO:0000318"/>
    <property type="project" value="GO_Central"/>
</dbReference>
<dbReference type="GO" id="GO:0005615">
    <property type="term" value="C:extracellular space"/>
    <property type="evidence" value="ECO:0000314"/>
    <property type="project" value="CAFA"/>
</dbReference>
<dbReference type="GO" id="GO:0008201">
    <property type="term" value="F:heparin binding"/>
    <property type="evidence" value="ECO:0000318"/>
    <property type="project" value="GO_Central"/>
</dbReference>
<dbReference type="GO" id="GO:0033700">
    <property type="term" value="P:phospholipid efflux"/>
    <property type="evidence" value="ECO:0000314"/>
    <property type="project" value="CAFA"/>
</dbReference>
<dbReference type="GO" id="GO:1902492">
    <property type="term" value="P:positive regulation of sperm capacitation"/>
    <property type="evidence" value="ECO:0000314"/>
    <property type="project" value="CAFA"/>
</dbReference>
<dbReference type="GO" id="GO:0007338">
    <property type="term" value="P:single fertilization"/>
    <property type="evidence" value="ECO:0007669"/>
    <property type="project" value="UniProtKB-KW"/>
</dbReference>
<dbReference type="GO" id="GO:0048240">
    <property type="term" value="P:sperm capacitation"/>
    <property type="evidence" value="ECO:0000318"/>
    <property type="project" value="GO_Central"/>
</dbReference>
<dbReference type="CDD" id="cd00062">
    <property type="entry name" value="FN2"/>
    <property type="match status" value="2"/>
</dbReference>
<dbReference type="FunFam" id="2.10.10.10:FF:000003">
    <property type="entry name" value="binder of sperm protein homolog 1"/>
    <property type="match status" value="1"/>
</dbReference>
<dbReference type="FunFam" id="2.10.10.10:FF:000005">
    <property type="entry name" value="Epididymal sperm binding protein 1"/>
    <property type="match status" value="1"/>
</dbReference>
<dbReference type="Gene3D" id="2.10.10.10">
    <property type="entry name" value="Fibronectin, type II, collagen-binding"/>
    <property type="match status" value="2"/>
</dbReference>
<dbReference type="InterPro" id="IPR000562">
    <property type="entry name" value="FN_type2_dom"/>
</dbReference>
<dbReference type="InterPro" id="IPR036943">
    <property type="entry name" value="FN_type2_sf"/>
</dbReference>
<dbReference type="InterPro" id="IPR013806">
    <property type="entry name" value="Kringle-like"/>
</dbReference>
<dbReference type="InterPro" id="IPR016356">
    <property type="entry name" value="Seminal_plasma_PDC-109-like"/>
</dbReference>
<dbReference type="InterPro" id="IPR051666">
    <property type="entry name" value="SP_Capacitation_Regulator"/>
</dbReference>
<dbReference type="PANTHER" id="PTHR22918">
    <property type="entry name" value="SEMINAL PLASMA PROTEIN"/>
    <property type="match status" value="1"/>
</dbReference>
<dbReference type="PANTHER" id="PTHR22918:SF3">
    <property type="entry name" value="SEMINAL PLASMA PROTEIN HSP-1"/>
    <property type="match status" value="1"/>
</dbReference>
<dbReference type="Pfam" id="PF00040">
    <property type="entry name" value="fn2"/>
    <property type="match status" value="2"/>
</dbReference>
<dbReference type="PIRSF" id="PIRSF002541">
    <property type="entry name" value="Seminal_plasma_PDC-109"/>
    <property type="match status" value="1"/>
</dbReference>
<dbReference type="PRINTS" id="PR00013">
    <property type="entry name" value="FNTYPEII"/>
</dbReference>
<dbReference type="SMART" id="SM00059">
    <property type="entry name" value="FN2"/>
    <property type="match status" value="2"/>
</dbReference>
<dbReference type="SUPFAM" id="SSF57440">
    <property type="entry name" value="Kringle-like"/>
    <property type="match status" value="2"/>
</dbReference>
<dbReference type="PROSITE" id="PS00023">
    <property type="entry name" value="FN2_1"/>
    <property type="match status" value="2"/>
</dbReference>
<dbReference type="PROSITE" id="PS51092">
    <property type="entry name" value="FN2_2"/>
    <property type="match status" value="2"/>
</dbReference>
<evidence type="ECO:0000255" key="1">
    <source>
        <dbReference type="PROSITE-ProRule" id="PRU00479"/>
    </source>
</evidence>
<evidence type="ECO:0000269" key="2">
    <source>
    </source>
</evidence>
<evidence type="ECO:0000269" key="3">
    <source>
    </source>
</evidence>
<evidence type="ECO:0000269" key="4">
    <source>
    </source>
</evidence>
<evidence type="ECO:0000305" key="5"/>
<evidence type="ECO:0007829" key="6">
    <source>
        <dbReference type="PDB" id="1H8P"/>
    </source>
</evidence>
<organism>
    <name type="scientific">Bos taurus</name>
    <name type="common">Bovine</name>
    <dbReference type="NCBI Taxonomy" id="9913"/>
    <lineage>
        <taxon>Eukaryota</taxon>
        <taxon>Metazoa</taxon>
        <taxon>Chordata</taxon>
        <taxon>Craniata</taxon>
        <taxon>Vertebrata</taxon>
        <taxon>Euteleostomi</taxon>
        <taxon>Mammalia</taxon>
        <taxon>Eutheria</taxon>
        <taxon>Laurasiatheria</taxon>
        <taxon>Artiodactyla</taxon>
        <taxon>Ruminantia</taxon>
        <taxon>Pecora</taxon>
        <taxon>Bovidae</taxon>
        <taxon>Bovinae</taxon>
        <taxon>Bos</taxon>
    </lineage>
</organism>